<keyword id="KW-0067">ATP-binding</keyword>
<keyword id="KW-0963">Cytoplasm</keyword>
<keyword id="KW-0210">Decarboxylase</keyword>
<keyword id="KW-0312">Gluconeogenesis</keyword>
<keyword id="KW-0456">Lyase</keyword>
<keyword id="KW-0464">Manganese</keyword>
<keyword id="KW-0479">Metal-binding</keyword>
<keyword id="KW-0547">Nucleotide-binding</keyword>
<comment type="function">
    <text evidence="1">Involved in the gluconeogenesis. Catalyzes the conversion of oxaloacetate (OAA) to phosphoenolpyruvate (PEP) through direct phosphoryl transfer between the nucleoside triphosphate and OAA.</text>
</comment>
<comment type="catalytic activity">
    <reaction evidence="1">
        <text>oxaloacetate + ATP = phosphoenolpyruvate + ADP + CO2</text>
        <dbReference type="Rhea" id="RHEA:18617"/>
        <dbReference type="ChEBI" id="CHEBI:16452"/>
        <dbReference type="ChEBI" id="CHEBI:16526"/>
        <dbReference type="ChEBI" id="CHEBI:30616"/>
        <dbReference type="ChEBI" id="CHEBI:58702"/>
        <dbReference type="ChEBI" id="CHEBI:456216"/>
        <dbReference type="EC" id="4.1.1.49"/>
    </reaction>
</comment>
<comment type="cofactor">
    <cofactor evidence="1">
        <name>Mn(2+)</name>
        <dbReference type="ChEBI" id="CHEBI:29035"/>
    </cofactor>
    <text evidence="1">Binds 1 Mn(2+) ion per subunit.</text>
</comment>
<comment type="pathway">
    <text evidence="1">Carbohydrate biosynthesis; gluconeogenesis.</text>
</comment>
<comment type="subunit">
    <text evidence="1">Monomer.</text>
</comment>
<comment type="subcellular location">
    <subcellularLocation>
        <location evidence="1">Cytoplasm</location>
    </subcellularLocation>
</comment>
<comment type="similarity">
    <text evidence="1">Belongs to the phosphoenolpyruvate carboxykinase (ATP) family.</text>
</comment>
<evidence type="ECO:0000255" key="1">
    <source>
        <dbReference type="HAMAP-Rule" id="MF_00453"/>
    </source>
</evidence>
<organism>
    <name type="scientific">Actinobacillus pleuropneumoniae serotype 7 (strain AP76)</name>
    <dbReference type="NCBI Taxonomy" id="537457"/>
    <lineage>
        <taxon>Bacteria</taxon>
        <taxon>Pseudomonadati</taxon>
        <taxon>Pseudomonadota</taxon>
        <taxon>Gammaproteobacteria</taxon>
        <taxon>Pasteurellales</taxon>
        <taxon>Pasteurellaceae</taxon>
        <taxon>Actinobacillus</taxon>
    </lineage>
</organism>
<sequence length="536" mass="59426">MLSRIEQELAQLGITNVKEIVRNPSYEQLFEEEMKPELEGFEKGRLTTSGAVAVDTGIFTGRSPKDKYIVYDETSKDNVWWTSDAVKNDNKPMNQATWQSLKELVTHQLSNKRLFVVDAFCGANKDSRVAVRIVTEVAWQAHFVKNMFVRPSEEELLNFVPDFVVMNGSKVTNPNWKEQGLNSENFVAFNLTEKIQLIGGTWYGGEMKKGLFSLMNYWLPLKGIASMHCSANVGAKGDVAVFFGLSGTGKTTLSTDPKRKLIGDDEHGWDDDGVFNYEGGCYAKTINLSEENEPDIYRAIRRDALLENVVVREDGSVDFADGSKTENTRVSYPIHHIDNIVEPVSKAGHAKKVIFLTADAFGVLPPVSKLTPEQTKYYFLSGFTAKLAGTERGITEPTPTFSACFGAAFLSLHPTKYAEVLVKRMEEAGSQAYLVNTGWNGSGKRISIKDTRGIIDAILDGSIEKAETKELPIFNLAIPTALPNVDPAILDPRDTYADKAQWQTKAEDLAGRFVKNFEKYTTNDEGKALVAAGPKL</sequence>
<accession>B3H1D9</accession>
<reference key="1">
    <citation type="submission" date="2008-06" db="EMBL/GenBank/DDBJ databases">
        <title>Genome and proteome analysis of A. pleuropneumoniae serotype 7.</title>
        <authorList>
            <person name="Linke B."/>
            <person name="Buettner F."/>
            <person name="Martinez-Arias R."/>
            <person name="Goesmann A."/>
            <person name="Baltes N."/>
            <person name="Tegetmeyer H."/>
            <person name="Singh M."/>
            <person name="Gerlach G.F."/>
        </authorList>
    </citation>
    <scope>NUCLEOTIDE SEQUENCE [LARGE SCALE GENOMIC DNA]</scope>
    <source>
        <strain>AP76</strain>
    </source>
</reference>
<dbReference type="EC" id="4.1.1.49" evidence="1"/>
<dbReference type="EMBL" id="CP001091">
    <property type="protein sequence ID" value="ACE61511.1"/>
    <property type="molecule type" value="Genomic_DNA"/>
</dbReference>
<dbReference type="RefSeq" id="WP_005617321.1">
    <property type="nucleotide sequence ID" value="NC_010939.1"/>
</dbReference>
<dbReference type="SMR" id="B3H1D9"/>
<dbReference type="KEGG" id="apa:APP7_0859"/>
<dbReference type="HOGENOM" id="CLU_018247_0_1_6"/>
<dbReference type="UniPathway" id="UPA00138"/>
<dbReference type="Proteomes" id="UP000001226">
    <property type="component" value="Chromosome"/>
</dbReference>
<dbReference type="GO" id="GO:0005829">
    <property type="term" value="C:cytosol"/>
    <property type="evidence" value="ECO:0007669"/>
    <property type="project" value="TreeGrafter"/>
</dbReference>
<dbReference type="GO" id="GO:0005524">
    <property type="term" value="F:ATP binding"/>
    <property type="evidence" value="ECO:0007669"/>
    <property type="project" value="UniProtKB-UniRule"/>
</dbReference>
<dbReference type="GO" id="GO:0046872">
    <property type="term" value="F:metal ion binding"/>
    <property type="evidence" value="ECO:0007669"/>
    <property type="project" value="UniProtKB-KW"/>
</dbReference>
<dbReference type="GO" id="GO:0004612">
    <property type="term" value="F:phosphoenolpyruvate carboxykinase (ATP) activity"/>
    <property type="evidence" value="ECO:0007669"/>
    <property type="project" value="UniProtKB-UniRule"/>
</dbReference>
<dbReference type="GO" id="GO:0006094">
    <property type="term" value="P:gluconeogenesis"/>
    <property type="evidence" value="ECO:0007669"/>
    <property type="project" value="UniProtKB-UniRule"/>
</dbReference>
<dbReference type="CDD" id="cd00484">
    <property type="entry name" value="PEPCK_ATP"/>
    <property type="match status" value="1"/>
</dbReference>
<dbReference type="FunFam" id="2.170.8.10:FF:000001">
    <property type="entry name" value="Phosphoenolpyruvate carboxykinase (ATP)"/>
    <property type="match status" value="1"/>
</dbReference>
<dbReference type="FunFam" id="3.40.449.10:FF:000001">
    <property type="entry name" value="Phosphoenolpyruvate carboxykinase (ATP)"/>
    <property type="match status" value="1"/>
</dbReference>
<dbReference type="Gene3D" id="3.90.228.20">
    <property type="match status" value="1"/>
</dbReference>
<dbReference type="Gene3D" id="3.40.449.10">
    <property type="entry name" value="Phosphoenolpyruvate Carboxykinase, domain 1"/>
    <property type="match status" value="1"/>
</dbReference>
<dbReference type="Gene3D" id="2.170.8.10">
    <property type="entry name" value="Phosphoenolpyruvate Carboxykinase, domain 2"/>
    <property type="match status" value="1"/>
</dbReference>
<dbReference type="HAMAP" id="MF_00453">
    <property type="entry name" value="PEPCK_ATP"/>
    <property type="match status" value="1"/>
</dbReference>
<dbReference type="InterPro" id="IPR001272">
    <property type="entry name" value="PEP_carboxykinase_ATP"/>
</dbReference>
<dbReference type="InterPro" id="IPR013035">
    <property type="entry name" value="PEP_carboxykinase_C"/>
</dbReference>
<dbReference type="InterPro" id="IPR008210">
    <property type="entry name" value="PEP_carboxykinase_N"/>
</dbReference>
<dbReference type="InterPro" id="IPR015994">
    <property type="entry name" value="PEPCK_ATP_CS"/>
</dbReference>
<dbReference type="NCBIfam" id="TIGR00224">
    <property type="entry name" value="pckA"/>
    <property type="match status" value="1"/>
</dbReference>
<dbReference type="NCBIfam" id="NF006819">
    <property type="entry name" value="PRK09344.1-1"/>
    <property type="match status" value="1"/>
</dbReference>
<dbReference type="NCBIfam" id="NF006820">
    <property type="entry name" value="PRK09344.1-2"/>
    <property type="match status" value="1"/>
</dbReference>
<dbReference type="NCBIfam" id="NF006821">
    <property type="entry name" value="PRK09344.1-3"/>
    <property type="match status" value="1"/>
</dbReference>
<dbReference type="PANTHER" id="PTHR30031:SF0">
    <property type="entry name" value="PHOSPHOENOLPYRUVATE CARBOXYKINASE (ATP)"/>
    <property type="match status" value="1"/>
</dbReference>
<dbReference type="PANTHER" id="PTHR30031">
    <property type="entry name" value="PHOSPHOENOLPYRUVATE CARBOXYKINASE ATP"/>
    <property type="match status" value="1"/>
</dbReference>
<dbReference type="Pfam" id="PF01293">
    <property type="entry name" value="PEPCK_ATP"/>
    <property type="match status" value="1"/>
</dbReference>
<dbReference type="PIRSF" id="PIRSF006294">
    <property type="entry name" value="PEP_crbxkin"/>
    <property type="match status" value="1"/>
</dbReference>
<dbReference type="SUPFAM" id="SSF68923">
    <property type="entry name" value="PEP carboxykinase N-terminal domain"/>
    <property type="match status" value="1"/>
</dbReference>
<dbReference type="SUPFAM" id="SSF53795">
    <property type="entry name" value="PEP carboxykinase-like"/>
    <property type="match status" value="1"/>
</dbReference>
<dbReference type="PROSITE" id="PS00532">
    <property type="entry name" value="PEPCK_ATP"/>
    <property type="match status" value="1"/>
</dbReference>
<name>PCKA_ACTP7</name>
<protein>
    <recommendedName>
        <fullName evidence="1">Phosphoenolpyruvate carboxykinase (ATP)</fullName>
        <shortName evidence="1">PCK</shortName>
        <shortName evidence="1">PEP carboxykinase</shortName>
        <shortName evidence="1">PEPCK</shortName>
        <ecNumber evidence="1">4.1.1.49</ecNumber>
    </recommendedName>
</protein>
<proteinExistence type="inferred from homology"/>
<feature type="chain" id="PRO_1000125049" description="Phosphoenolpyruvate carboxykinase (ATP)">
    <location>
        <begin position="1"/>
        <end position="536"/>
    </location>
</feature>
<feature type="binding site" evidence="1">
    <location>
        <position position="62"/>
    </location>
    <ligand>
        <name>substrate</name>
    </ligand>
</feature>
<feature type="binding site" evidence="1">
    <location>
        <position position="203"/>
    </location>
    <ligand>
        <name>substrate</name>
    </ligand>
</feature>
<feature type="binding site" evidence="1">
    <location>
        <position position="209"/>
    </location>
    <ligand>
        <name>ATP</name>
        <dbReference type="ChEBI" id="CHEBI:30616"/>
    </ligand>
</feature>
<feature type="binding site" evidence="1">
    <location>
        <position position="209"/>
    </location>
    <ligand>
        <name>Mn(2+)</name>
        <dbReference type="ChEBI" id="CHEBI:29035"/>
    </ligand>
</feature>
<feature type="binding site" evidence="1">
    <location>
        <position position="209"/>
    </location>
    <ligand>
        <name>substrate</name>
    </ligand>
</feature>
<feature type="binding site" evidence="1">
    <location>
        <position position="228"/>
    </location>
    <ligand>
        <name>ATP</name>
        <dbReference type="ChEBI" id="CHEBI:30616"/>
    </ligand>
</feature>
<feature type="binding site" evidence="1">
    <location>
        <position position="228"/>
    </location>
    <ligand>
        <name>Mn(2+)</name>
        <dbReference type="ChEBI" id="CHEBI:29035"/>
    </ligand>
</feature>
<feature type="binding site" evidence="1">
    <location>
        <begin position="244"/>
        <end position="252"/>
    </location>
    <ligand>
        <name>ATP</name>
        <dbReference type="ChEBI" id="CHEBI:30616"/>
    </ligand>
</feature>
<feature type="binding site" evidence="1">
    <location>
        <position position="265"/>
    </location>
    <ligand>
        <name>Mn(2+)</name>
        <dbReference type="ChEBI" id="CHEBI:29035"/>
    </ligand>
</feature>
<feature type="binding site" evidence="1">
    <location>
        <position position="293"/>
    </location>
    <ligand>
        <name>ATP</name>
        <dbReference type="ChEBI" id="CHEBI:30616"/>
    </ligand>
</feature>
<feature type="binding site" evidence="1">
    <location>
        <position position="329"/>
    </location>
    <ligand>
        <name>ATP</name>
        <dbReference type="ChEBI" id="CHEBI:30616"/>
    </ligand>
</feature>
<feature type="binding site" evidence="1">
    <location>
        <position position="329"/>
    </location>
    <ligand>
        <name>substrate</name>
    </ligand>
</feature>
<feature type="binding site" evidence="1">
    <location>
        <begin position="445"/>
        <end position="446"/>
    </location>
    <ligand>
        <name>ATP</name>
        <dbReference type="ChEBI" id="CHEBI:30616"/>
    </ligand>
</feature>
<feature type="binding site" evidence="1">
    <location>
        <position position="451"/>
    </location>
    <ligand>
        <name>ATP</name>
        <dbReference type="ChEBI" id="CHEBI:30616"/>
    </ligand>
</feature>
<gene>
    <name evidence="1" type="primary">pckA</name>
    <name type="ordered locus">APP7_0859</name>
</gene>